<comment type="function">
    <text evidence="1">Plays an important role in control of proteasome function. Inhibits the hydrolysis of protein and peptide substrates by the 20S proteasome. Also inhibits the activation of the proteasome by the proteasome regulatory proteins PA700 and PA28 (By similarity).</text>
</comment>
<comment type="subunit">
    <text evidence="1">Monomer and homodimer. Interacts with FBXO7 (By similarity).</text>
</comment>
<comment type="subcellular location">
    <subcellularLocation>
        <location evidence="1">Cytoplasm</location>
    </subcellularLocation>
    <subcellularLocation>
        <location evidence="1">Endoplasmic reticulum</location>
    </subcellularLocation>
</comment>
<comment type="similarity">
    <text evidence="5">Belongs to the proteasome inhibitor PI31 family.</text>
</comment>
<feature type="initiator methionine" description="Removed" evidence="3">
    <location>
        <position position="1"/>
    </location>
</feature>
<feature type="chain" id="PRO_0000220922" description="Proteasome inhibitor PI31 subunit">
    <location>
        <begin position="2"/>
        <end position="271"/>
    </location>
</feature>
<feature type="region of interest" description="Important for homodimerization and interaction with FBXO7" evidence="1">
    <location>
        <begin position="2"/>
        <end position="150"/>
    </location>
</feature>
<feature type="region of interest" description="Disordered" evidence="4">
    <location>
        <begin position="222"/>
        <end position="271"/>
    </location>
</feature>
<feature type="compositionally biased region" description="Pro residues" evidence="4">
    <location>
        <begin position="251"/>
        <end position="265"/>
    </location>
</feature>
<feature type="modified residue" description="N-acetylalanine" evidence="3">
    <location>
        <position position="2"/>
    </location>
</feature>
<feature type="modified residue" description="Phosphoserine" evidence="3">
    <location>
        <position position="153"/>
    </location>
</feature>
<feature type="modified residue" description="Omega-N-methylarginine" evidence="2">
    <location>
        <position position="205"/>
    </location>
</feature>
<feature type="modified residue" description="Asymmetric dimethylarginine" evidence="2">
    <location>
        <position position="219"/>
    </location>
</feature>
<feature type="modified residue" description="Omega-N-methylarginine" evidence="3">
    <location>
        <position position="231"/>
    </location>
</feature>
<feature type="modified residue" description="Phosphoserine" evidence="3">
    <location>
        <position position="252"/>
    </location>
</feature>
<organism>
    <name type="scientific">Pongo abelii</name>
    <name type="common">Sumatran orangutan</name>
    <name type="synonym">Pongo pygmaeus abelii</name>
    <dbReference type="NCBI Taxonomy" id="9601"/>
    <lineage>
        <taxon>Eukaryota</taxon>
        <taxon>Metazoa</taxon>
        <taxon>Chordata</taxon>
        <taxon>Craniata</taxon>
        <taxon>Vertebrata</taxon>
        <taxon>Euteleostomi</taxon>
        <taxon>Mammalia</taxon>
        <taxon>Eutheria</taxon>
        <taxon>Euarchontoglires</taxon>
        <taxon>Primates</taxon>
        <taxon>Haplorrhini</taxon>
        <taxon>Catarrhini</taxon>
        <taxon>Hominidae</taxon>
        <taxon>Pongo</taxon>
    </lineage>
</organism>
<keyword id="KW-0007">Acetylation</keyword>
<keyword id="KW-0963">Cytoplasm</keyword>
<keyword id="KW-0256">Endoplasmic reticulum</keyword>
<keyword id="KW-0488">Methylation</keyword>
<keyword id="KW-0597">Phosphoprotein</keyword>
<keyword id="KW-0647">Proteasome</keyword>
<keyword id="KW-1185">Reference proteome</keyword>
<proteinExistence type="evidence at transcript level"/>
<name>PSMF1_PONAB</name>
<gene>
    <name type="primary">PSMF1</name>
</gene>
<dbReference type="EMBL" id="CR857871">
    <property type="protein sequence ID" value="CAH90124.1"/>
    <property type="molecule type" value="mRNA"/>
</dbReference>
<dbReference type="RefSeq" id="NP_001125022.1">
    <property type="nucleotide sequence ID" value="NM_001131550.1"/>
</dbReference>
<dbReference type="SMR" id="Q5RDN3"/>
<dbReference type="FunCoup" id="Q5RDN3">
    <property type="interactions" value="2917"/>
</dbReference>
<dbReference type="STRING" id="9601.ENSPPYP00000012129"/>
<dbReference type="Ensembl" id="ENSPPYT00000012607.2">
    <property type="protein sequence ID" value="ENSPPYP00000012129.1"/>
    <property type="gene ID" value="ENSPPYG00000010859.2"/>
</dbReference>
<dbReference type="GeneID" id="100171902"/>
<dbReference type="KEGG" id="pon:100171902"/>
<dbReference type="CTD" id="9491"/>
<dbReference type="eggNOG" id="KOG4761">
    <property type="taxonomic scope" value="Eukaryota"/>
</dbReference>
<dbReference type="GeneTree" id="ENSGT00390000012257"/>
<dbReference type="HOGENOM" id="CLU_090116_0_0_1"/>
<dbReference type="InParanoid" id="Q5RDN3"/>
<dbReference type="OMA" id="PFGFPDI"/>
<dbReference type="OrthoDB" id="68090at2759"/>
<dbReference type="TreeFam" id="TF106238"/>
<dbReference type="Proteomes" id="UP000001595">
    <property type="component" value="Chromosome 20"/>
</dbReference>
<dbReference type="GO" id="GO:0005829">
    <property type="term" value="C:cytosol"/>
    <property type="evidence" value="ECO:0000250"/>
    <property type="project" value="UniProtKB"/>
</dbReference>
<dbReference type="GO" id="GO:0005783">
    <property type="term" value="C:endoplasmic reticulum"/>
    <property type="evidence" value="ECO:0000250"/>
    <property type="project" value="UniProtKB"/>
</dbReference>
<dbReference type="GO" id="GO:0048471">
    <property type="term" value="C:perinuclear region of cytoplasm"/>
    <property type="evidence" value="ECO:0007669"/>
    <property type="project" value="Ensembl"/>
</dbReference>
<dbReference type="GO" id="GO:0000502">
    <property type="term" value="C:proteasome complex"/>
    <property type="evidence" value="ECO:0007669"/>
    <property type="project" value="UniProtKB-KW"/>
</dbReference>
<dbReference type="GO" id="GO:0004866">
    <property type="term" value="F:endopeptidase inhibitor activity"/>
    <property type="evidence" value="ECO:0007669"/>
    <property type="project" value="InterPro"/>
</dbReference>
<dbReference type="GO" id="GO:0070628">
    <property type="term" value="F:proteasome binding"/>
    <property type="evidence" value="ECO:0000250"/>
    <property type="project" value="UniProtKB"/>
</dbReference>
<dbReference type="GO" id="GO:0046982">
    <property type="term" value="F:protein heterodimerization activity"/>
    <property type="evidence" value="ECO:0007669"/>
    <property type="project" value="Ensembl"/>
</dbReference>
<dbReference type="GO" id="GO:0042803">
    <property type="term" value="F:protein homodimerization activity"/>
    <property type="evidence" value="ECO:0007669"/>
    <property type="project" value="Ensembl"/>
</dbReference>
<dbReference type="GO" id="GO:1901799">
    <property type="term" value="P:negative regulation of proteasomal protein catabolic process"/>
    <property type="evidence" value="ECO:0000250"/>
    <property type="project" value="UniProtKB"/>
</dbReference>
<dbReference type="GO" id="GO:0043161">
    <property type="term" value="P:proteasome-mediated ubiquitin-dependent protein catabolic process"/>
    <property type="evidence" value="ECO:0007669"/>
    <property type="project" value="InterPro"/>
</dbReference>
<dbReference type="GO" id="GO:0006511">
    <property type="term" value="P:ubiquitin-dependent protein catabolic process"/>
    <property type="evidence" value="ECO:0000250"/>
    <property type="project" value="UniProtKB"/>
</dbReference>
<dbReference type="FunFam" id="3.40.1000.30:FF:000002">
    <property type="entry name" value="Proteasome inhibitor PI31 subunit"/>
    <property type="match status" value="1"/>
</dbReference>
<dbReference type="Gene3D" id="3.40.1000.30">
    <property type="match status" value="1"/>
</dbReference>
<dbReference type="InterPro" id="IPR045128">
    <property type="entry name" value="PI31-like"/>
</dbReference>
<dbReference type="InterPro" id="IPR013886">
    <property type="entry name" value="PI31_Prot_C"/>
</dbReference>
<dbReference type="InterPro" id="IPR021625">
    <property type="entry name" value="PI31_Prot_N"/>
</dbReference>
<dbReference type="PANTHER" id="PTHR13266">
    <property type="entry name" value="PROTEASOME INHIBITOR"/>
    <property type="match status" value="1"/>
</dbReference>
<dbReference type="PANTHER" id="PTHR13266:SF1">
    <property type="entry name" value="PROTEASOME INHIBITOR PI31 SUBUNIT"/>
    <property type="match status" value="1"/>
</dbReference>
<dbReference type="Pfam" id="PF08577">
    <property type="entry name" value="PI31_Prot_C"/>
    <property type="match status" value="1"/>
</dbReference>
<dbReference type="Pfam" id="PF11566">
    <property type="entry name" value="PI31_Prot_N"/>
    <property type="match status" value="1"/>
</dbReference>
<evidence type="ECO:0000250" key="1"/>
<evidence type="ECO:0000250" key="2">
    <source>
        <dbReference type="UniProtKB" id="Q8BHL8"/>
    </source>
</evidence>
<evidence type="ECO:0000250" key="3">
    <source>
        <dbReference type="UniProtKB" id="Q92530"/>
    </source>
</evidence>
<evidence type="ECO:0000256" key="4">
    <source>
        <dbReference type="SAM" id="MobiDB-lite"/>
    </source>
</evidence>
<evidence type="ECO:0000305" key="5"/>
<protein>
    <recommendedName>
        <fullName>Proteasome inhibitor PI31 subunit</fullName>
    </recommendedName>
</protein>
<sequence>MAGLEVLFASAAPAITCTQDALVCFLHWEVVTHGYYALGVGDQPGPNDKKSELLPAGWNNNKDLYVLRYEYKDGSRKLLVKAITVESSMILNVLEYGSQQVADLTLNLDDYIDAEHLGDFHRTYKNSEELRSRIVSGIITPIHEQWEKANVSSPHREFPPATAREVDPLRIPPHHPHTSRQPPWCDPLGPFAVGGEDLDPFGHRRGGMIVDPLRSGFPRALIDPSSGLPNRLPPGAVPPGARFDPFGPIGTSPPGPNPDHLPPPGYDDMYL</sequence>
<reference key="1">
    <citation type="submission" date="2004-11" db="EMBL/GenBank/DDBJ databases">
        <authorList>
            <consortium name="The German cDNA consortium"/>
        </authorList>
    </citation>
    <scope>NUCLEOTIDE SEQUENCE [LARGE SCALE MRNA]</scope>
    <source>
        <tissue>Brain cortex</tissue>
    </source>
</reference>
<accession>Q5RDN3</accession>